<accession>B4TZG0</accession>
<protein>
    <recommendedName>
        <fullName evidence="1">UPF0178 protein YaiI</fullName>
    </recommendedName>
</protein>
<gene>
    <name evidence="1" type="primary">yaiI</name>
    <name type="ordered locus">SeSA_A0443</name>
</gene>
<proteinExistence type="inferred from homology"/>
<reference key="1">
    <citation type="journal article" date="2011" name="J. Bacteriol.">
        <title>Comparative genomics of 28 Salmonella enterica isolates: evidence for CRISPR-mediated adaptive sublineage evolution.</title>
        <authorList>
            <person name="Fricke W.F."/>
            <person name="Mammel M.K."/>
            <person name="McDermott P.F."/>
            <person name="Tartera C."/>
            <person name="White D.G."/>
            <person name="Leclerc J.E."/>
            <person name="Ravel J."/>
            <person name="Cebula T.A."/>
        </authorList>
    </citation>
    <scope>NUCLEOTIDE SEQUENCE [LARGE SCALE GENOMIC DNA]</scope>
    <source>
        <strain>CVM19633</strain>
    </source>
</reference>
<evidence type="ECO:0000255" key="1">
    <source>
        <dbReference type="HAMAP-Rule" id="MF_00489"/>
    </source>
</evidence>
<dbReference type="EMBL" id="CP001127">
    <property type="protein sequence ID" value="ACF91273.1"/>
    <property type="molecule type" value="Genomic_DNA"/>
</dbReference>
<dbReference type="RefSeq" id="WP_000158137.1">
    <property type="nucleotide sequence ID" value="NC_011094.1"/>
</dbReference>
<dbReference type="KEGG" id="sew:SeSA_A0443"/>
<dbReference type="HOGENOM" id="CLU_106619_1_0_6"/>
<dbReference type="Proteomes" id="UP000001865">
    <property type="component" value="Chromosome"/>
</dbReference>
<dbReference type="CDD" id="cd18720">
    <property type="entry name" value="PIN_YqxD-like"/>
    <property type="match status" value="1"/>
</dbReference>
<dbReference type="HAMAP" id="MF_00489">
    <property type="entry name" value="UPF0178"/>
    <property type="match status" value="1"/>
</dbReference>
<dbReference type="InterPro" id="IPR003791">
    <property type="entry name" value="UPF0178"/>
</dbReference>
<dbReference type="NCBIfam" id="NF001095">
    <property type="entry name" value="PRK00124.1"/>
    <property type="match status" value="1"/>
</dbReference>
<dbReference type="PANTHER" id="PTHR35146">
    <property type="entry name" value="UPF0178 PROTEIN YAII"/>
    <property type="match status" value="1"/>
</dbReference>
<dbReference type="PANTHER" id="PTHR35146:SF1">
    <property type="entry name" value="UPF0178 PROTEIN YAII"/>
    <property type="match status" value="1"/>
</dbReference>
<dbReference type="Pfam" id="PF02639">
    <property type="entry name" value="DUF188"/>
    <property type="match status" value="1"/>
</dbReference>
<comment type="similarity">
    <text evidence="1">Belongs to the UPF0178 family.</text>
</comment>
<name>YAII_SALSV</name>
<organism>
    <name type="scientific">Salmonella schwarzengrund (strain CVM19633)</name>
    <dbReference type="NCBI Taxonomy" id="439843"/>
    <lineage>
        <taxon>Bacteria</taxon>
        <taxon>Pseudomonadati</taxon>
        <taxon>Pseudomonadota</taxon>
        <taxon>Gammaproteobacteria</taxon>
        <taxon>Enterobacterales</taxon>
        <taxon>Enterobacteriaceae</taxon>
        <taxon>Salmonella</taxon>
    </lineage>
</organism>
<feature type="chain" id="PRO_1000126213" description="UPF0178 protein YaiI">
    <location>
        <begin position="1"/>
        <end position="151"/>
    </location>
</feature>
<sequence length="151" mass="16945">MTIWVDADACPNVIKEILYRAAERMQLPLILVANQALRVPPSRFIRTLRVAAGFDVADNEIVRQCEAGDLVITADIPLAAEVLEKGAAALNPRGERYSDATIRERLTMRDFMDTLRASGVQTGGPNTLSPRDRQHFAAELDKWWLESQRKK</sequence>